<evidence type="ECO:0000255" key="1">
    <source>
        <dbReference type="HAMAP-Rule" id="MF_00235"/>
    </source>
</evidence>
<proteinExistence type="inferred from homology"/>
<accession>Q2JIK8</accession>
<keyword id="KW-0067">ATP-binding</keyword>
<keyword id="KW-0963">Cytoplasm</keyword>
<keyword id="KW-0418">Kinase</keyword>
<keyword id="KW-0545">Nucleotide biosynthesis</keyword>
<keyword id="KW-0547">Nucleotide-binding</keyword>
<keyword id="KW-1185">Reference proteome</keyword>
<keyword id="KW-0808">Transferase</keyword>
<dbReference type="EC" id="2.7.4.3" evidence="1"/>
<dbReference type="EMBL" id="CP000240">
    <property type="protein sequence ID" value="ABD03546.1"/>
    <property type="molecule type" value="Genomic_DNA"/>
</dbReference>
<dbReference type="RefSeq" id="WP_011434171.1">
    <property type="nucleotide sequence ID" value="NC_007776.1"/>
</dbReference>
<dbReference type="SMR" id="Q2JIK8"/>
<dbReference type="STRING" id="321332.CYB_2616"/>
<dbReference type="KEGG" id="cyb:CYB_2616"/>
<dbReference type="eggNOG" id="COG0563">
    <property type="taxonomic scope" value="Bacteria"/>
</dbReference>
<dbReference type="HOGENOM" id="CLU_032354_4_1_3"/>
<dbReference type="OrthoDB" id="9805030at2"/>
<dbReference type="UniPathway" id="UPA00588">
    <property type="reaction ID" value="UER00649"/>
</dbReference>
<dbReference type="Proteomes" id="UP000001938">
    <property type="component" value="Chromosome"/>
</dbReference>
<dbReference type="GO" id="GO:0005737">
    <property type="term" value="C:cytoplasm"/>
    <property type="evidence" value="ECO:0007669"/>
    <property type="project" value="UniProtKB-SubCell"/>
</dbReference>
<dbReference type="GO" id="GO:0004017">
    <property type="term" value="F:adenylate kinase activity"/>
    <property type="evidence" value="ECO:0007669"/>
    <property type="project" value="UniProtKB-UniRule"/>
</dbReference>
<dbReference type="GO" id="GO:0005524">
    <property type="term" value="F:ATP binding"/>
    <property type="evidence" value="ECO:0007669"/>
    <property type="project" value="UniProtKB-UniRule"/>
</dbReference>
<dbReference type="GO" id="GO:0044209">
    <property type="term" value="P:AMP salvage"/>
    <property type="evidence" value="ECO:0007669"/>
    <property type="project" value="UniProtKB-UniRule"/>
</dbReference>
<dbReference type="CDD" id="cd01428">
    <property type="entry name" value="ADK"/>
    <property type="match status" value="1"/>
</dbReference>
<dbReference type="Gene3D" id="3.40.50.300">
    <property type="entry name" value="P-loop containing nucleotide triphosphate hydrolases"/>
    <property type="match status" value="1"/>
</dbReference>
<dbReference type="HAMAP" id="MF_00235">
    <property type="entry name" value="Adenylate_kinase_Adk"/>
    <property type="match status" value="1"/>
</dbReference>
<dbReference type="InterPro" id="IPR006259">
    <property type="entry name" value="Adenyl_kin_sub"/>
</dbReference>
<dbReference type="InterPro" id="IPR000850">
    <property type="entry name" value="Adenylat/UMP-CMP_kin"/>
</dbReference>
<dbReference type="InterPro" id="IPR033690">
    <property type="entry name" value="Adenylat_kinase_CS"/>
</dbReference>
<dbReference type="InterPro" id="IPR027417">
    <property type="entry name" value="P-loop_NTPase"/>
</dbReference>
<dbReference type="NCBIfam" id="TIGR01351">
    <property type="entry name" value="adk"/>
    <property type="match status" value="1"/>
</dbReference>
<dbReference type="NCBIfam" id="NF001381">
    <property type="entry name" value="PRK00279.1-3"/>
    <property type="match status" value="1"/>
</dbReference>
<dbReference type="NCBIfam" id="NF011100">
    <property type="entry name" value="PRK14527.1"/>
    <property type="match status" value="1"/>
</dbReference>
<dbReference type="NCBIfam" id="NF011101">
    <property type="entry name" value="PRK14528.1"/>
    <property type="match status" value="1"/>
</dbReference>
<dbReference type="NCBIfam" id="NF011104">
    <property type="entry name" value="PRK14531.1"/>
    <property type="match status" value="1"/>
</dbReference>
<dbReference type="NCBIfam" id="NF011105">
    <property type="entry name" value="PRK14532.1"/>
    <property type="match status" value="1"/>
</dbReference>
<dbReference type="PANTHER" id="PTHR23359">
    <property type="entry name" value="NUCLEOTIDE KINASE"/>
    <property type="match status" value="1"/>
</dbReference>
<dbReference type="Pfam" id="PF00406">
    <property type="entry name" value="ADK"/>
    <property type="match status" value="1"/>
</dbReference>
<dbReference type="PRINTS" id="PR00094">
    <property type="entry name" value="ADENYLTKNASE"/>
</dbReference>
<dbReference type="SUPFAM" id="SSF52540">
    <property type="entry name" value="P-loop containing nucleoside triphosphate hydrolases"/>
    <property type="match status" value="1"/>
</dbReference>
<dbReference type="PROSITE" id="PS00113">
    <property type="entry name" value="ADENYLATE_KINASE"/>
    <property type="match status" value="1"/>
</dbReference>
<gene>
    <name evidence="1" type="primary">adk</name>
    <name type="ordered locus">CYB_2616</name>
</gene>
<protein>
    <recommendedName>
        <fullName evidence="1">Adenylate kinase</fullName>
        <shortName evidence="1">AK</shortName>
        <ecNumber evidence="1">2.7.4.3</ecNumber>
    </recommendedName>
    <alternativeName>
        <fullName evidence="1">ATP-AMP transphosphorylase</fullName>
    </alternativeName>
    <alternativeName>
        <fullName evidence="1">ATP:AMP phosphotransferase</fullName>
    </alternativeName>
    <alternativeName>
        <fullName evidence="1">Adenylate monophosphate kinase</fullName>
    </alternativeName>
</protein>
<reference key="1">
    <citation type="journal article" date="2007" name="ISME J.">
        <title>Population level functional diversity in a microbial community revealed by comparative genomic and metagenomic analyses.</title>
        <authorList>
            <person name="Bhaya D."/>
            <person name="Grossman A.R."/>
            <person name="Steunou A.-S."/>
            <person name="Khuri N."/>
            <person name="Cohan F.M."/>
            <person name="Hamamura N."/>
            <person name="Melendrez M.C."/>
            <person name="Bateson M.M."/>
            <person name="Ward D.M."/>
            <person name="Heidelberg J.F."/>
        </authorList>
    </citation>
    <scope>NUCLEOTIDE SEQUENCE [LARGE SCALE GENOMIC DNA]</scope>
    <source>
        <strain>JA-2-3B'a(2-13)</strain>
    </source>
</reference>
<feature type="chain" id="PRO_1000058922" description="Adenylate kinase">
    <location>
        <begin position="1"/>
        <end position="193"/>
    </location>
</feature>
<feature type="region of interest" description="NMP" evidence="1">
    <location>
        <begin position="31"/>
        <end position="60"/>
    </location>
</feature>
<feature type="region of interest" description="LID" evidence="1">
    <location>
        <begin position="126"/>
        <end position="136"/>
    </location>
</feature>
<feature type="binding site" evidence="1">
    <location>
        <begin position="11"/>
        <end position="16"/>
    </location>
    <ligand>
        <name>ATP</name>
        <dbReference type="ChEBI" id="CHEBI:30616"/>
    </ligand>
</feature>
<feature type="binding site" evidence="1">
    <location>
        <position position="32"/>
    </location>
    <ligand>
        <name>AMP</name>
        <dbReference type="ChEBI" id="CHEBI:456215"/>
    </ligand>
</feature>
<feature type="binding site" evidence="1">
    <location>
        <position position="37"/>
    </location>
    <ligand>
        <name>AMP</name>
        <dbReference type="ChEBI" id="CHEBI:456215"/>
    </ligand>
</feature>
<feature type="binding site" evidence="1">
    <location>
        <begin position="58"/>
        <end position="60"/>
    </location>
    <ligand>
        <name>AMP</name>
        <dbReference type="ChEBI" id="CHEBI:456215"/>
    </ligand>
</feature>
<feature type="binding site" evidence="1">
    <location>
        <begin position="85"/>
        <end position="88"/>
    </location>
    <ligand>
        <name>AMP</name>
        <dbReference type="ChEBI" id="CHEBI:456215"/>
    </ligand>
</feature>
<feature type="binding site" evidence="1">
    <location>
        <position position="92"/>
    </location>
    <ligand>
        <name>AMP</name>
        <dbReference type="ChEBI" id="CHEBI:456215"/>
    </ligand>
</feature>
<feature type="binding site" evidence="1">
    <location>
        <position position="127"/>
    </location>
    <ligand>
        <name>ATP</name>
        <dbReference type="ChEBI" id="CHEBI:30616"/>
    </ligand>
</feature>
<feature type="binding site" evidence="1">
    <location>
        <position position="133"/>
    </location>
    <ligand>
        <name>AMP</name>
        <dbReference type="ChEBI" id="CHEBI:456215"/>
    </ligand>
</feature>
<feature type="binding site" evidence="1">
    <location>
        <position position="145"/>
    </location>
    <ligand>
        <name>AMP</name>
        <dbReference type="ChEBI" id="CHEBI:456215"/>
    </ligand>
</feature>
<feature type="binding site" evidence="1">
    <location>
        <position position="173"/>
    </location>
    <ligand>
        <name>ATP</name>
        <dbReference type="ChEBI" id="CHEBI:30616"/>
    </ligand>
</feature>
<name>KAD_SYNJB</name>
<organism>
    <name type="scientific">Synechococcus sp. (strain JA-2-3B'a(2-13))</name>
    <name type="common">Cyanobacteria bacterium Yellowstone B-Prime</name>
    <dbReference type="NCBI Taxonomy" id="321332"/>
    <lineage>
        <taxon>Bacteria</taxon>
        <taxon>Bacillati</taxon>
        <taxon>Cyanobacteriota</taxon>
        <taxon>Cyanophyceae</taxon>
        <taxon>Synechococcales</taxon>
        <taxon>Synechococcaceae</taxon>
        <taxon>Synechococcus</taxon>
    </lineage>
</organism>
<comment type="function">
    <text evidence="1">Catalyzes the reversible transfer of the terminal phosphate group between ATP and AMP. Plays an important role in cellular energy homeostasis and in adenine nucleotide metabolism.</text>
</comment>
<comment type="catalytic activity">
    <reaction evidence="1">
        <text>AMP + ATP = 2 ADP</text>
        <dbReference type="Rhea" id="RHEA:12973"/>
        <dbReference type="ChEBI" id="CHEBI:30616"/>
        <dbReference type="ChEBI" id="CHEBI:456215"/>
        <dbReference type="ChEBI" id="CHEBI:456216"/>
        <dbReference type="EC" id="2.7.4.3"/>
    </reaction>
</comment>
<comment type="pathway">
    <text evidence="1">Purine metabolism; AMP biosynthesis via salvage pathway; AMP from ADP: step 1/1.</text>
</comment>
<comment type="subunit">
    <text evidence="1">Monomer.</text>
</comment>
<comment type="subcellular location">
    <subcellularLocation>
        <location evidence="1">Cytoplasm</location>
    </subcellularLocation>
</comment>
<comment type="domain">
    <text evidence="1">Consists of three domains, a large central CORE domain and two small peripheral domains, NMPbind and LID, which undergo movements during catalysis. The LID domain closes over the site of phosphoryl transfer upon ATP binding. Assembling and dissambling the active center during each catalytic cycle provides an effective means to prevent ATP hydrolysis.</text>
</comment>
<comment type="similarity">
    <text evidence="1">Belongs to the adenylate kinase family.</text>
</comment>
<sequence length="193" mass="21450">MPRLIFLGPPGAGKGTQAERLAAIYHTPKISTGDLLRAEVKAQTPLGCQAKVYMDAGELVPDEVLIGMVKGQLQQSPEQGWILDGFPRTLAQAEALEELLQELGQDYDYVLNLEVPDEVVVARLLARGKEQGRSDDADRSVILKRLEVYRQQTAPLIDFYEAKGRLQRVNGNQPMESVQEHLQALLEGFRRTA</sequence>